<feature type="chain" id="PRO_0000441098" description="Kunitz-type trypsin inhibitor IVTI" evidence="1">
    <location>
        <begin position="1"/>
        <end position="29" status="greater than"/>
    </location>
</feature>
<feature type="non-terminal residue" evidence="2">
    <location>
        <position position="29"/>
    </location>
</feature>
<evidence type="ECO:0000269" key="1">
    <source ref="1"/>
</evidence>
<evidence type="ECO:0000303" key="2">
    <source ref="1"/>
</evidence>
<evidence type="ECO:0000305" key="3"/>
<reference evidence="3" key="1">
    <citation type="journal article" date="2016" name="Process Biochem.">
        <title>Exploiting the biological roles of the trypsin inhibitor from Inga vera seeds: A multifunctional Kunitz inhibitor.</title>
        <authorList>
            <person name="da Silva Bezerra C."/>
            <person name="de Oliveira C.F.R."/>
            <person name="Machado O.L.T."/>
            <person name="de Melloe G.S.V."/>
            <person name="da Rocha Pittae M.G."/>
            <person name="de Melo Rego M.J.B."/>
            <person name="Napoleao T.H."/>
            <person name="Guedes Paiva P.M."/>
            <person name="de Fatima Ferreira Ribera S."/>
            <person name="Gomes V.M."/>
            <person name="Silva O.N."/>
            <person name="Maria-Neto S."/>
            <person name="Franco O.L."/>
            <person name="Macedo M.L.R."/>
        </authorList>
    </citation>
    <scope>PROTEIN SEQUENCE</scope>
    <scope>FUNCTION</scope>
    <scope>BIOPHYSICOCHEMICAL PROPERTIES</scope>
    <scope>SUBUNIT</scope>
    <scope>MASS SPECTROMETRY</scope>
    <source>
        <tissue evidence="2">Seed</tissue>
    </source>
</reference>
<keyword id="KW-0044">Antibiotic</keyword>
<keyword id="KW-0929">Antimicrobial</keyword>
<keyword id="KW-0903">Direct protein sequencing</keyword>
<keyword id="KW-0295">Fungicide</keyword>
<keyword id="KW-0646">Protease inhibitor</keyword>
<keyword id="KW-0722">Serine protease inhibitor</keyword>
<proteinExistence type="evidence at protein level"/>
<sequence>EVVLDSDGEMLRNGGKYYLSPASPIGGGA</sequence>
<organism evidence="2">
    <name type="scientific">Inga vera</name>
    <name type="common">River koko</name>
    <dbReference type="NCBI Taxonomy" id="486092"/>
    <lineage>
        <taxon>Eukaryota</taxon>
        <taxon>Viridiplantae</taxon>
        <taxon>Streptophyta</taxon>
        <taxon>Embryophyta</taxon>
        <taxon>Tracheophyta</taxon>
        <taxon>Spermatophyta</taxon>
        <taxon>Magnoliopsida</taxon>
        <taxon>eudicotyledons</taxon>
        <taxon>Gunneridae</taxon>
        <taxon>Pentapetalae</taxon>
        <taxon>rosids</taxon>
        <taxon>fabids</taxon>
        <taxon>Fabales</taxon>
        <taxon>Fabaceae</taxon>
        <taxon>Caesalpinioideae</taxon>
        <taxon>mimosoid clade</taxon>
        <taxon>Ingeae</taxon>
        <taxon>Inga</taxon>
    </lineage>
</organism>
<comment type="function">
    <text evidence="1">Inhibits bovine trypsin but not chymotrypsin. Also inhibits trypsin-like enzymes from midgut of several lepidopteran species and inhibits larval development in those species. Has fungicidal activity against yeast C.buinensis. Has a bacteriostatic effect against E.coli. Is not cytotoxic.</text>
</comment>
<comment type="biophysicochemical properties">
    <phDependence>
        <text evidence="1">Activity is stable between pH 2 and 11.</text>
    </phDependence>
    <temperatureDependence>
        <text evidence="1">Activity is stable up to 60 degrees Celsius and declines rapidly at higher temperatures.</text>
    </temperatureDependence>
</comment>
<comment type="subunit">
    <text evidence="1">Monomer and dimer.</text>
</comment>
<comment type="mass spectrometry">
    <text>Monomer.</text>
</comment>
<comment type="mass spectrometry">
    <text>Dimer.</text>
</comment>
<comment type="similarity">
    <text evidence="3">Belongs to the protease inhibitor I3 (leguminous Kunitz-type inhibitor) family.</text>
</comment>
<protein>
    <recommendedName>
        <fullName evidence="2">Kunitz-type trypsin inhibitor IVTI</fullName>
    </recommendedName>
</protein>
<dbReference type="SMR" id="C0HKQ3"/>
<dbReference type="GO" id="GO:0004867">
    <property type="term" value="F:serine-type endopeptidase inhibitor activity"/>
    <property type="evidence" value="ECO:0000314"/>
    <property type="project" value="UniProtKB"/>
</dbReference>
<dbReference type="GO" id="GO:0050832">
    <property type="term" value="P:defense response to fungus"/>
    <property type="evidence" value="ECO:0000314"/>
    <property type="project" value="UniProtKB"/>
</dbReference>
<dbReference type="GO" id="GO:0050829">
    <property type="term" value="P:defense response to Gram-negative bacterium"/>
    <property type="evidence" value="ECO:0000314"/>
    <property type="project" value="UniProtKB"/>
</dbReference>
<dbReference type="GO" id="GO:0031640">
    <property type="term" value="P:killing of cells of another organism"/>
    <property type="evidence" value="ECO:0007669"/>
    <property type="project" value="UniProtKB-KW"/>
</dbReference>
<dbReference type="GO" id="GO:0010951">
    <property type="term" value="P:negative regulation of endopeptidase activity"/>
    <property type="evidence" value="ECO:0000314"/>
    <property type="project" value="UniProtKB"/>
</dbReference>
<dbReference type="Gene3D" id="2.80.10.50">
    <property type="match status" value="1"/>
</dbReference>
<dbReference type="InterPro" id="IPR011065">
    <property type="entry name" value="Kunitz_inhibitor_STI-like_sf"/>
</dbReference>
<dbReference type="InterPro" id="IPR002160">
    <property type="entry name" value="Prot_inh_Kunz-lg"/>
</dbReference>
<dbReference type="SUPFAM" id="SSF50386">
    <property type="entry name" value="STI-like"/>
    <property type="match status" value="1"/>
</dbReference>
<dbReference type="PROSITE" id="PS00283">
    <property type="entry name" value="SOYBEAN_KUNITZ"/>
    <property type="match status" value="1"/>
</dbReference>
<accession>C0HKQ3</accession>
<name>KTI1_INGVE</name>